<gene>
    <name type="primary">PGK</name>
</gene>
<sequence>VDFNVPIKEGKVKNTTRIQGAIPTLKKILEQNPKNVTLMSHMGRPDGKRVEKDSLKIVVPKLEELLGTKVNFVNDCVGSEALEASNAGNGQINLLENLRFHIQEEGKGLDANGAKIKADKESVKKFRKELSSLGDIYVNDAFGTAHRAHSSMVGIDHKIRVAGYLMKKELDYFAKALETPQRPFLVILGGAKVADKIQLIKSMLDKVDEMIIGGGMAFTFLKKYIMFPIGKSLFDEEGYKIVDEIIAKAKEKNVKIHLPTDFVCGTGLDASSPVALHDLKSGIPDGWLGLDAGQLTQRENADAIGRAKTIVWNGPQGAFEIEQFKNGSVSMLNALVKQTQNGATTIVGGGDTVNLVGANKANDKLSH</sequence>
<protein>
    <recommendedName>
        <fullName>Phosphoglycerate kinase</fullName>
        <ecNumber evidence="2">2.7.2.3</ecNumber>
    </recommendedName>
</protein>
<reference key="1">
    <citation type="submission" date="1997-05" db="EMBL/GenBank/DDBJ databases">
        <authorList>
            <person name="Pearlman R.E."/>
        </authorList>
    </citation>
    <scope>NUCLEOTIDE SEQUENCE [GENOMIC DNA]</scope>
</reference>
<evidence type="ECO:0000250" key="1"/>
<evidence type="ECO:0000250" key="2">
    <source>
        <dbReference type="UniProtKB" id="P00558"/>
    </source>
</evidence>
<evidence type="ECO:0000250" key="3">
    <source>
        <dbReference type="UniProtKB" id="Q7SIB7"/>
    </source>
</evidence>
<evidence type="ECO:0000305" key="4"/>
<organism>
    <name type="scientific">Paramecium primaurelia</name>
    <dbReference type="NCBI Taxonomy" id="5886"/>
    <lineage>
        <taxon>Eukaryota</taxon>
        <taxon>Sar</taxon>
        <taxon>Alveolata</taxon>
        <taxon>Ciliophora</taxon>
        <taxon>Intramacronucleata</taxon>
        <taxon>Oligohymenophorea</taxon>
        <taxon>Peniculida</taxon>
        <taxon>Parameciidae</taxon>
        <taxon>Paramecium</taxon>
    </lineage>
</organism>
<keyword id="KW-0067">ATP-binding</keyword>
<keyword id="KW-0324">Glycolysis</keyword>
<keyword id="KW-0418">Kinase</keyword>
<keyword id="KW-0460">Magnesium</keyword>
<keyword id="KW-0479">Metal-binding</keyword>
<keyword id="KW-0547">Nucleotide-binding</keyword>
<keyword id="KW-0808">Transferase</keyword>
<accession>O00869</accession>
<comment type="catalytic activity">
    <reaction evidence="2">
        <text>(2R)-3-phosphoglycerate + ATP = (2R)-3-phospho-glyceroyl phosphate + ADP</text>
        <dbReference type="Rhea" id="RHEA:14801"/>
        <dbReference type="ChEBI" id="CHEBI:30616"/>
        <dbReference type="ChEBI" id="CHEBI:57604"/>
        <dbReference type="ChEBI" id="CHEBI:58272"/>
        <dbReference type="ChEBI" id="CHEBI:456216"/>
        <dbReference type="EC" id="2.7.2.3"/>
    </reaction>
</comment>
<comment type="cofactor">
    <cofactor evidence="2">
        <name>Mg(2+)</name>
        <dbReference type="ChEBI" id="CHEBI:18420"/>
    </cofactor>
</comment>
<comment type="pathway">
    <text>Carbohydrate degradation; glycolysis; pyruvate from D-glyceraldehyde 3-phosphate: step 2/5.</text>
</comment>
<comment type="subunit">
    <text evidence="1">Monomer.</text>
</comment>
<comment type="similarity">
    <text evidence="4">Belongs to the phosphoglycerate kinase family.</text>
</comment>
<name>PGK_PARPR</name>
<feature type="chain" id="PRO_0000145858" description="Phosphoglycerate kinase">
    <location>
        <begin position="1" status="less than"/>
        <end position="367" status="greater than"/>
    </location>
</feature>
<feature type="binding site" evidence="2">
    <location>
        <position position="1"/>
    </location>
    <ligand>
        <name>(2R)-3-phosphoglycerate</name>
        <dbReference type="ChEBI" id="CHEBI:58272"/>
    </ligand>
</feature>
<feature type="binding site" evidence="3">
    <location>
        <position position="2"/>
    </location>
    <ligand>
        <name>(2R)-3-phosphoglycerate</name>
        <dbReference type="ChEBI" id="CHEBI:58272"/>
    </ligand>
</feature>
<feature type="binding site" evidence="2">
    <location>
        <position position="3"/>
    </location>
    <ligand>
        <name>(2R)-3-phosphoglycerate</name>
        <dbReference type="ChEBI" id="CHEBI:58272"/>
    </ligand>
</feature>
<feature type="binding site" evidence="3">
    <location>
        <position position="4"/>
    </location>
    <ligand>
        <name>(2R)-3-phosphoglycerate</name>
        <dbReference type="ChEBI" id="CHEBI:58272"/>
    </ligand>
</feature>
<feature type="binding site" evidence="3">
    <location>
        <position position="17"/>
    </location>
    <ligand>
        <name>(2R)-3-phosphoglycerate</name>
        <dbReference type="ChEBI" id="CHEBI:58272"/>
    </ligand>
</feature>
<feature type="binding site" evidence="2">
    <location>
        <position position="40"/>
    </location>
    <ligand>
        <name>(2R)-3-phosphoglycerate</name>
        <dbReference type="ChEBI" id="CHEBI:58272"/>
    </ligand>
</feature>
<feature type="binding site" evidence="3">
    <location>
        <position position="41"/>
    </location>
    <ligand>
        <name>(2R)-3-phosphoglycerate</name>
        <dbReference type="ChEBI" id="CHEBI:58272"/>
    </ligand>
</feature>
<feature type="binding site" evidence="2">
    <location>
        <position position="43"/>
    </location>
    <ligand>
        <name>(2R)-3-phosphoglycerate</name>
        <dbReference type="ChEBI" id="CHEBI:58272"/>
    </ligand>
</feature>
<feature type="binding site" evidence="3">
    <location>
        <position position="44"/>
    </location>
    <ligand>
        <name>(2R)-3-phosphoglycerate</name>
        <dbReference type="ChEBI" id="CHEBI:58272"/>
    </ligand>
</feature>
<feature type="binding site" evidence="2">
    <location>
        <position position="98"/>
    </location>
    <ligand>
        <name>(2R)-3-phosphoglycerate</name>
        <dbReference type="ChEBI" id="CHEBI:58272"/>
    </ligand>
</feature>
<feature type="binding site" evidence="3">
    <location>
        <position position="99"/>
    </location>
    <ligand>
        <name>(2R)-3-phosphoglycerate</name>
        <dbReference type="ChEBI" id="CHEBI:58272"/>
    </ligand>
</feature>
<feature type="binding site" evidence="2">
    <location>
        <position position="146"/>
    </location>
    <ligand>
        <name>(2R)-3-phosphoglycerate</name>
        <dbReference type="ChEBI" id="CHEBI:58272"/>
    </ligand>
</feature>
<feature type="binding site" evidence="3">
    <location>
        <position position="147"/>
    </location>
    <ligand>
        <name>(2R)-3-phosphoglycerate</name>
        <dbReference type="ChEBI" id="CHEBI:58272"/>
    </ligand>
</feature>
<feature type="binding site" evidence="2">
    <location>
        <position position="190"/>
    </location>
    <ligand>
        <name>ADP</name>
        <dbReference type="ChEBI" id="CHEBI:456216"/>
    </ligand>
</feature>
<feature type="binding site" evidence="2">
    <location>
        <position position="190"/>
    </location>
    <ligand>
        <name>CDP</name>
        <dbReference type="ChEBI" id="CHEBI:58069"/>
    </ligand>
</feature>
<feature type="binding site" evidence="3">
    <location>
        <position position="191"/>
    </location>
    <ligand>
        <name>AMP</name>
        <dbReference type="ChEBI" id="CHEBI:456215"/>
    </ligand>
</feature>
<feature type="binding site" evidence="3">
    <location>
        <position position="191"/>
    </location>
    <ligand>
        <name>ATP</name>
        <dbReference type="ChEBI" id="CHEBI:30616"/>
    </ligand>
</feature>
<feature type="binding site" evidence="2">
    <location>
        <position position="191"/>
    </location>
    <ligand>
        <name>Mg(2+)</name>
        <dbReference type="ChEBI" id="CHEBI:18420"/>
    </ligand>
</feature>
<feature type="binding site" evidence="3">
    <location>
        <position position="192"/>
    </location>
    <ligand>
        <name>AMP</name>
        <dbReference type="ChEBI" id="CHEBI:456215"/>
    </ligand>
</feature>
<feature type="binding site" evidence="2">
    <location>
        <position position="194"/>
    </location>
    <ligand>
        <name>Mg(2+)</name>
        <dbReference type="ChEBI" id="CHEBI:18420"/>
    </ligand>
</feature>
<feature type="binding site" evidence="2">
    <location>
        <position position="195"/>
    </location>
    <ligand>
        <name>CDP</name>
        <dbReference type="ChEBI" id="CHEBI:58069"/>
    </ligand>
</feature>
<feature type="binding site" evidence="2">
    <location>
        <position position="195"/>
    </location>
    <ligand>
        <name>Mg(2+)</name>
        <dbReference type="ChEBI" id="CHEBI:18420"/>
    </ligand>
</feature>
<feature type="binding site" evidence="3">
    <location>
        <position position="196"/>
    </location>
    <ligand>
        <name>AMP</name>
        <dbReference type="ChEBI" id="CHEBI:456215"/>
    </ligand>
</feature>
<feature type="binding site" evidence="3">
    <location>
        <position position="196"/>
    </location>
    <ligand>
        <name>ATP</name>
        <dbReference type="ChEBI" id="CHEBI:30616"/>
    </ligand>
</feature>
<feature type="binding site" evidence="2">
    <location>
        <position position="214"/>
    </location>
    <ligand>
        <name>ADP</name>
        <dbReference type="ChEBI" id="CHEBI:456216"/>
    </ligand>
</feature>
<feature type="binding site" evidence="2">
    <location>
        <position position="214"/>
    </location>
    <ligand>
        <name>CDP</name>
        <dbReference type="ChEBI" id="CHEBI:58069"/>
    </ligand>
</feature>
<feature type="binding site" evidence="3">
    <location>
        <position position="215"/>
    </location>
    <ligand>
        <name>AMP</name>
        <dbReference type="ChEBI" id="CHEBI:456215"/>
    </ligand>
</feature>
<feature type="binding site" evidence="3">
    <location>
        <position position="215"/>
    </location>
    <ligand>
        <name>ATP</name>
        <dbReference type="ChEBI" id="CHEBI:30616"/>
    </ligand>
</feature>
<feature type="binding site" evidence="3">
    <location>
        <position position="289"/>
    </location>
    <ligand>
        <name>AMP</name>
        <dbReference type="ChEBI" id="CHEBI:456215"/>
    </ligand>
</feature>
<feature type="binding site" evidence="3">
    <location>
        <position position="289"/>
    </location>
    <ligand>
        <name>ATP</name>
        <dbReference type="ChEBI" id="CHEBI:30616"/>
    </ligand>
</feature>
<feature type="binding site" evidence="2">
    <location>
        <position position="314"/>
    </location>
    <ligand>
        <name>CDP</name>
        <dbReference type="ChEBI" id="CHEBI:58069"/>
    </ligand>
</feature>
<feature type="binding site" evidence="2">
    <location>
        <position position="319"/>
    </location>
    <ligand>
        <name>ADP</name>
        <dbReference type="ChEBI" id="CHEBI:456216"/>
    </ligand>
</feature>
<feature type="binding site" evidence="2">
    <location>
        <position position="319"/>
    </location>
    <ligand>
        <name>CDP</name>
        <dbReference type="ChEBI" id="CHEBI:58069"/>
    </ligand>
</feature>
<feature type="binding site" evidence="3">
    <location>
        <position position="320"/>
    </location>
    <ligand>
        <name>AMP</name>
        <dbReference type="ChEBI" id="CHEBI:456215"/>
    </ligand>
</feature>
<feature type="binding site" evidence="3">
    <location>
        <position position="320"/>
    </location>
    <ligand>
        <name>ATP</name>
        <dbReference type="ChEBI" id="CHEBI:30616"/>
    </ligand>
</feature>
<feature type="binding site" evidence="3">
    <location>
        <position position="351"/>
    </location>
    <ligand>
        <name>ATP</name>
        <dbReference type="ChEBI" id="CHEBI:30616"/>
    </ligand>
</feature>
<feature type="binding site" evidence="3">
    <location>
        <position position="351"/>
    </location>
    <ligand>
        <name>Mg(2+)</name>
        <dbReference type="ChEBI" id="CHEBI:18420"/>
    </ligand>
</feature>
<feature type="binding site" evidence="3">
    <location>
        <position position="352"/>
    </location>
    <ligand>
        <name>ATP</name>
        <dbReference type="ChEBI" id="CHEBI:30616"/>
    </ligand>
</feature>
<feature type="non-terminal residue">
    <location>
        <position position="1"/>
    </location>
</feature>
<feature type="non-terminal residue">
    <location>
        <position position="367"/>
    </location>
</feature>
<dbReference type="EC" id="2.7.2.3" evidence="2"/>
<dbReference type="EMBL" id="AF001849">
    <property type="protein sequence ID" value="AAB58241.1"/>
    <property type="molecule type" value="Genomic_DNA"/>
</dbReference>
<dbReference type="SMR" id="O00869"/>
<dbReference type="UniPathway" id="UPA00109">
    <property type="reaction ID" value="UER00185"/>
</dbReference>
<dbReference type="GO" id="GO:0005829">
    <property type="term" value="C:cytosol"/>
    <property type="evidence" value="ECO:0007669"/>
    <property type="project" value="TreeGrafter"/>
</dbReference>
<dbReference type="GO" id="GO:0043531">
    <property type="term" value="F:ADP binding"/>
    <property type="evidence" value="ECO:0007669"/>
    <property type="project" value="TreeGrafter"/>
</dbReference>
<dbReference type="GO" id="GO:0005524">
    <property type="term" value="F:ATP binding"/>
    <property type="evidence" value="ECO:0007669"/>
    <property type="project" value="UniProtKB-KW"/>
</dbReference>
<dbReference type="GO" id="GO:0046872">
    <property type="term" value="F:metal ion binding"/>
    <property type="evidence" value="ECO:0007669"/>
    <property type="project" value="UniProtKB-KW"/>
</dbReference>
<dbReference type="GO" id="GO:0004618">
    <property type="term" value="F:phosphoglycerate kinase activity"/>
    <property type="evidence" value="ECO:0007669"/>
    <property type="project" value="UniProtKB-EC"/>
</dbReference>
<dbReference type="GO" id="GO:0006094">
    <property type="term" value="P:gluconeogenesis"/>
    <property type="evidence" value="ECO:0007669"/>
    <property type="project" value="TreeGrafter"/>
</dbReference>
<dbReference type="GO" id="GO:0006096">
    <property type="term" value="P:glycolytic process"/>
    <property type="evidence" value="ECO:0007669"/>
    <property type="project" value="UniProtKB-UniPathway"/>
</dbReference>
<dbReference type="FunFam" id="3.40.50.1260:FF:000003">
    <property type="entry name" value="Phosphoglycerate kinase"/>
    <property type="match status" value="1"/>
</dbReference>
<dbReference type="Gene3D" id="3.40.50.1260">
    <property type="entry name" value="Phosphoglycerate kinase, N-terminal domain"/>
    <property type="match status" value="3"/>
</dbReference>
<dbReference type="InterPro" id="IPR001576">
    <property type="entry name" value="Phosphoglycerate_kinase"/>
</dbReference>
<dbReference type="InterPro" id="IPR015824">
    <property type="entry name" value="Phosphoglycerate_kinase_N"/>
</dbReference>
<dbReference type="InterPro" id="IPR036043">
    <property type="entry name" value="Phosphoglycerate_kinase_sf"/>
</dbReference>
<dbReference type="PANTHER" id="PTHR11406">
    <property type="entry name" value="PHOSPHOGLYCERATE KINASE"/>
    <property type="match status" value="1"/>
</dbReference>
<dbReference type="PANTHER" id="PTHR11406:SF0">
    <property type="entry name" value="PHOSPHOGLYCERATE KINASE"/>
    <property type="match status" value="1"/>
</dbReference>
<dbReference type="Pfam" id="PF00162">
    <property type="entry name" value="PGK"/>
    <property type="match status" value="1"/>
</dbReference>
<dbReference type="PIRSF" id="PIRSF000724">
    <property type="entry name" value="Pgk"/>
    <property type="match status" value="1"/>
</dbReference>
<dbReference type="PRINTS" id="PR00477">
    <property type="entry name" value="PHGLYCKINASE"/>
</dbReference>
<dbReference type="SUPFAM" id="SSF53748">
    <property type="entry name" value="Phosphoglycerate kinase"/>
    <property type="match status" value="1"/>
</dbReference>
<proteinExistence type="inferred from homology"/>